<proteinExistence type="inferred from homology"/>
<protein>
    <recommendedName>
        <fullName evidence="1">Translational regulator CsrA</fullName>
    </recommendedName>
    <alternativeName>
        <fullName evidence="1">Carbon storage regulator</fullName>
    </alternativeName>
</protein>
<feature type="chain" id="PRO_1000076996" description="Translational regulator CsrA">
    <location>
        <begin position="1"/>
        <end position="65"/>
    </location>
</feature>
<sequence length="65" mass="7125">MLILTRRVGETLMIGDEVTVTVLGVKGNQVRIGVNAPKEVSVHREEIYQRIQSEKSGTPSEGGNF</sequence>
<accession>A9KYF6</accession>
<comment type="function">
    <text evidence="1">A key translational regulator that binds mRNA to regulate translation initiation and/or mRNA stability. Mediates global changes in gene expression, shifting from rapid growth to stress survival by linking envelope stress, the stringent response and the catabolite repression systems. Usually binds in the 5'-UTR; binding at or near the Shine-Dalgarno sequence prevents ribosome-binding, repressing translation, binding elsewhere in the 5'-UTR can activate translation and/or stabilize the mRNA. Its function is antagonized by small RNA(s).</text>
</comment>
<comment type="subunit">
    <text evidence="1">Homodimer; the beta-strands of each monomer intercalate to form a hydrophobic core, while the alpha-helices form wings that extend away from the core.</text>
</comment>
<comment type="subcellular location">
    <subcellularLocation>
        <location evidence="1">Cytoplasm</location>
    </subcellularLocation>
</comment>
<comment type="similarity">
    <text evidence="1">Belongs to the CsrA/RsmA family.</text>
</comment>
<reference key="1">
    <citation type="submission" date="2007-11" db="EMBL/GenBank/DDBJ databases">
        <title>Complete sequence of chromosome of Shewanella baltica OS195.</title>
        <authorList>
            <consortium name="US DOE Joint Genome Institute"/>
            <person name="Copeland A."/>
            <person name="Lucas S."/>
            <person name="Lapidus A."/>
            <person name="Barry K."/>
            <person name="Glavina del Rio T."/>
            <person name="Dalin E."/>
            <person name="Tice H."/>
            <person name="Pitluck S."/>
            <person name="Chain P."/>
            <person name="Malfatti S."/>
            <person name="Shin M."/>
            <person name="Vergez L."/>
            <person name="Schmutz J."/>
            <person name="Larimer F."/>
            <person name="Land M."/>
            <person name="Hauser L."/>
            <person name="Kyrpides N."/>
            <person name="Kim E."/>
            <person name="Brettar I."/>
            <person name="Rodrigues J."/>
            <person name="Konstantinidis K."/>
            <person name="Klappenbach J."/>
            <person name="Hofle M."/>
            <person name="Tiedje J."/>
            <person name="Richardson P."/>
        </authorList>
    </citation>
    <scope>NUCLEOTIDE SEQUENCE [LARGE SCALE GENOMIC DNA]</scope>
    <source>
        <strain>OS195</strain>
    </source>
</reference>
<name>CSRA_SHEB9</name>
<evidence type="ECO:0000255" key="1">
    <source>
        <dbReference type="HAMAP-Rule" id="MF_00167"/>
    </source>
</evidence>
<keyword id="KW-0010">Activator</keyword>
<keyword id="KW-0963">Cytoplasm</keyword>
<keyword id="KW-0678">Repressor</keyword>
<keyword id="KW-0694">RNA-binding</keyword>
<keyword id="KW-0810">Translation regulation</keyword>
<gene>
    <name evidence="1" type="primary">csrA</name>
    <name type="ordered locus">Sbal195_3265</name>
</gene>
<organism>
    <name type="scientific">Shewanella baltica (strain OS195)</name>
    <dbReference type="NCBI Taxonomy" id="399599"/>
    <lineage>
        <taxon>Bacteria</taxon>
        <taxon>Pseudomonadati</taxon>
        <taxon>Pseudomonadota</taxon>
        <taxon>Gammaproteobacteria</taxon>
        <taxon>Alteromonadales</taxon>
        <taxon>Shewanellaceae</taxon>
        <taxon>Shewanella</taxon>
    </lineage>
</organism>
<dbReference type="EMBL" id="CP000891">
    <property type="protein sequence ID" value="ABX50427.1"/>
    <property type="molecule type" value="Genomic_DNA"/>
</dbReference>
<dbReference type="RefSeq" id="WP_006082602.1">
    <property type="nucleotide sequence ID" value="NC_009997.1"/>
</dbReference>
<dbReference type="SMR" id="A9KYF6"/>
<dbReference type="GeneID" id="94727129"/>
<dbReference type="KEGG" id="sbn:Sbal195_3265"/>
<dbReference type="HOGENOM" id="CLU_164837_2_2_6"/>
<dbReference type="Proteomes" id="UP000000770">
    <property type="component" value="Chromosome"/>
</dbReference>
<dbReference type="GO" id="GO:0005829">
    <property type="term" value="C:cytosol"/>
    <property type="evidence" value="ECO:0007669"/>
    <property type="project" value="TreeGrafter"/>
</dbReference>
<dbReference type="GO" id="GO:0048027">
    <property type="term" value="F:mRNA 5'-UTR binding"/>
    <property type="evidence" value="ECO:0007669"/>
    <property type="project" value="UniProtKB-UniRule"/>
</dbReference>
<dbReference type="GO" id="GO:0006402">
    <property type="term" value="P:mRNA catabolic process"/>
    <property type="evidence" value="ECO:0007669"/>
    <property type="project" value="InterPro"/>
</dbReference>
<dbReference type="GO" id="GO:0045947">
    <property type="term" value="P:negative regulation of translational initiation"/>
    <property type="evidence" value="ECO:0007669"/>
    <property type="project" value="UniProtKB-UniRule"/>
</dbReference>
<dbReference type="GO" id="GO:0045948">
    <property type="term" value="P:positive regulation of translational initiation"/>
    <property type="evidence" value="ECO:0007669"/>
    <property type="project" value="UniProtKB-UniRule"/>
</dbReference>
<dbReference type="GO" id="GO:0006109">
    <property type="term" value="P:regulation of carbohydrate metabolic process"/>
    <property type="evidence" value="ECO:0007669"/>
    <property type="project" value="UniProtKB-UniRule"/>
</dbReference>
<dbReference type="FunFam" id="2.60.40.4380:FF:000001">
    <property type="entry name" value="Translational regulator CsrA"/>
    <property type="match status" value="1"/>
</dbReference>
<dbReference type="Gene3D" id="2.60.40.4380">
    <property type="entry name" value="Translational regulator CsrA"/>
    <property type="match status" value="1"/>
</dbReference>
<dbReference type="HAMAP" id="MF_00167">
    <property type="entry name" value="CsrA"/>
    <property type="match status" value="1"/>
</dbReference>
<dbReference type="InterPro" id="IPR003751">
    <property type="entry name" value="CsrA"/>
</dbReference>
<dbReference type="InterPro" id="IPR036107">
    <property type="entry name" value="CsrA_sf"/>
</dbReference>
<dbReference type="NCBIfam" id="TIGR00202">
    <property type="entry name" value="csrA"/>
    <property type="match status" value="1"/>
</dbReference>
<dbReference type="NCBIfam" id="NF002469">
    <property type="entry name" value="PRK01712.1"/>
    <property type="match status" value="1"/>
</dbReference>
<dbReference type="PANTHER" id="PTHR34984">
    <property type="entry name" value="CARBON STORAGE REGULATOR"/>
    <property type="match status" value="1"/>
</dbReference>
<dbReference type="PANTHER" id="PTHR34984:SF1">
    <property type="entry name" value="CARBON STORAGE REGULATOR"/>
    <property type="match status" value="1"/>
</dbReference>
<dbReference type="Pfam" id="PF02599">
    <property type="entry name" value="CsrA"/>
    <property type="match status" value="1"/>
</dbReference>
<dbReference type="SUPFAM" id="SSF117130">
    <property type="entry name" value="CsrA-like"/>
    <property type="match status" value="1"/>
</dbReference>